<dbReference type="SMR" id="C0HKF9"/>
<dbReference type="GO" id="GO:0006952">
    <property type="term" value="P:defense response"/>
    <property type="evidence" value="ECO:0007669"/>
    <property type="project" value="UniProtKB-KW"/>
</dbReference>
<dbReference type="InterPro" id="IPR005535">
    <property type="entry name" value="Cyclotide"/>
</dbReference>
<dbReference type="InterPro" id="IPR012323">
    <property type="entry name" value="Cyclotide_bracelet_CS"/>
</dbReference>
<dbReference type="InterPro" id="IPR036146">
    <property type="entry name" value="Cyclotide_sf"/>
</dbReference>
<dbReference type="Pfam" id="PF03784">
    <property type="entry name" value="Cyclotide"/>
    <property type="match status" value="1"/>
</dbReference>
<dbReference type="PIRSF" id="PIRSF037891">
    <property type="entry name" value="Cycloviolacin"/>
    <property type="match status" value="1"/>
</dbReference>
<dbReference type="SUPFAM" id="SSF57038">
    <property type="entry name" value="Cyclotides"/>
    <property type="match status" value="1"/>
</dbReference>
<dbReference type="PROSITE" id="PS51052">
    <property type="entry name" value="CYCLOTIDE"/>
    <property type="match status" value="1"/>
</dbReference>
<dbReference type="PROSITE" id="PS60008">
    <property type="entry name" value="CYCLOTIDE_BRACELET"/>
    <property type="match status" value="1"/>
</dbReference>
<reference evidence="4" key="1">
    <citation type="journal article" date="2011" name="J. Biol. Chem.">
        <title>Discovery and characterization of novel cyclotides originated from chimeric precursors consisting of albumin-1 chain a and cyclotide domains in the fabaceae family.</title>
        <authorList>
            <person name="Nguyen G.K."/>
            <person name="Zhang S."/>
            <person name="Nguyen N.T."/>
            <person name="Nguyen P.Q."/>
            <person name="Chiu M.S."/>
            <person name="Hardjojo A."/>
            <person name="Tam J.P."/>
        </authorList>
    </citation>
    <scope>PROTEIN SEQUENCE</scope>
    <scope>PRESENCE OF DISULFIDE BONDS</scope>
    <scope>CYCLIZATION</scope>
    <scope>TISSUE SPECIFICITY</scope>
    <scope>MASS SPECTROMETRY</scope>
    <scope>IDENTIFICATION BY MASS SPECTROMETRY</scope>
</reference>
<accession>C0HKF9</accession>
<keyword id="KW-0903">Direct protein sequencing</keyword>
<keyword id="KW-1015">Disulfide bond</keyword>
<keyword id="KW-0960">Knottin</keyword>
<keyword id="KW-0611">Plant defense</keyword>
<organism evidence="3">
    <name type="scientific">Clitoria ternatea</name>
    <name type="common">Butterfly pea</name>
    <dbReference type="NCBI Taxonomy" id="43366"/>
    <lineage>
        <taxon>Eukaryota</taxon>
        <taxon>Viridiplantae</taxon>
        <taxon>Streptophyta</taxon>
        <taxon>Embryophyta</taxon>
        <taxon>Tracheophyta</taxon>
        <taxon>Spermatophyta</taxon>
        <taxon>Magnoliopsida</taxon>
        <taxon>eudicotyledons</taxon>
        <taxon>Gunneridae</taxon>
        <taxon>Pentapetalae</taxon>
        <taxon>rosids</taxon>
        <taxon>fabids</taxon>
        <taxon>Fabales</taxon>
        <taxon>Fabaceae</taxon>
        <taxon>Papilionoideae</taxon>
        <taxon>50 kb inversion clade</taxon>
        <taxon>NPAAA clade</taxon>
        <taxon>indigoferoid/millettioid clade</taxon>
        <taxon>Phaseoleae</taxon>
        <taxon>Clitoria</taxon>
    </lineage>
</organism>
<sequence length="30" mass="3228">SIPCGESCVYIPCITTIVGCSCKDKVCYKN</sequence>
<protein>
    <recommendedName>
        <fullName evidence="3">Cliotide T6</fullName>
    </recommendedName>
</protein>
<feature type="peptide" id="PRO_0000440057" description="Cliotide T6" evidence="2">
    <location>
        <begin position="1"/>
        <end position="30"/>
    </location>
</feature>
<feature type="disulfide bond" evidence="1">
    <location>
        <begin position="4"/>
        <end position="20"/>
    </location>
</feature>
<feature type="disulfide bond" evidence="1">
    <location>
        <begin position="8"/>
        <end position="22"/>
    </location>
</feature>
<feature type="disulfide bond" evidence="1">
    <location>
        <begin position="13"/>
        <end position="27"/>
    </location>
</feature>
<feature type="cross-link" description="Cyclopeptide (Ser-Asn)" evidence="3">
    <location>
        <begin position="1"/>
        <end position="30"/>
    </location>
</feature>
<evidence type="ECO:0000255" key="1">
    <source>
        <dbReference type="PROSITE-ProRule" id="PRU00395"/>
    </source>
</evidence>
<evidence type="ECO:0000269" key="2">
    <source>
    </source>
</evidence>
<evidence type="ECO:0000303" key="3">
    <source>
    </source>
</evidence>
<evidence type="ECO:0000305" key="4"/>
<evidence type="ECO:0000305" key="5">
    <source>
    </source>
</evidence>
<comment type="function">
    <text evidence="1">Probably participates in a plant defense mechanism.</text>
</comment>
<comment type="tissue specificity">
    <text evidence="2">Expressed in pod but not in flower, stem, shoot, leaf, seed, root and nodule (at protein level).</text>
</comment>
<comment type="domain">
    <text evidence="4">The presence of a 'disulfide through disulfide knot' structurally defines this protein as a knottin.</text>
</comment>
<comment type="PTM">
    <text evidence="2">Contains 3 disulfide bonds.</text>
</comment>
<comment type="PTM">
    <text evidence="1 2">This is a cyclic peptide.</text>
</comment>
<comment type="mass spectrometry" mass="3118.0" method="MALDI" evidence="2"/>
<comment type="similarity">
    <text evidence="1">Belongs to the cyclotide family. Bracelet subfamily.</text>
</comment>
<comment type="caution">
    <text evidence="5">This peptide is cyclic. The start position was chosen by similarity to cliotide T1 for which the DNA sequence is known.</text>
</comment>
<name>CYC6_CLITE</name>
<proteinExistence type="evidence at protein level"/>